<proteinExistence type="evidence at protein level"/>
<feature type="chain" id="PRO_1000056382" description="Beta-ketoacyl-[acyl-carrier-protein] synthase III">
    <location>
        <begin position="1"/>
        <end position="320"/>
    </location>
</feature>
<feature type="region of interest" description="ACP-binding" evidence="1">
    <location>
        <begin position="248"/>
        <end position="252"/>
    </location>
</feature>
<feature type="active site" evidence="1">
    <location>
        <position position="114"/>
    </location>
</feature>
<feature type="active site" evidence="1">
    <location>
        <position position="247"/>
    </location>
</feature>
<feature type="active site" evidence="1">
    <location>
        <position position="277"/>
    </location>
</feature>
<feature type="strand" evidence="2">
    <location>
        <begin position="3"/>
        <end position="12"/>
    </location>
</feature>
<feature type="strand" evidence="2">
    <location>
        <begin position="15"/>
        <end position="19"/>
    </location>
</feature>
<feature type="helix" evidence="2">
    <location>
        <begin position="20"/>
        <end position="23"/>
    </location>
</feature>
<feature type="turn" evidence="2">
    <location>
        <begin position="24"/>
        <end position="26"/>
    </location>
</feature>
<feature type="helix" evidence="2">
    <location>
        <begin position="31"/>
        <end position="38"/>
    </location>
</feature>
<feature type="strand" evidence="2">
    <location>
        <begin position="42"/>
        <end position="45"/>
    </location>
</feature>
<feature type="helix" evidence="2">
    <location>
        <begin position="52"/>
        <end position="66"/>
    </location>
</feature>
<feature type="helix" evidence="2">
    <location>
        <begin position="71"/>
        <end position="73"/>
    </location>
</feature>
<feature type="strand" evidence="2">
    <location>
        <begin position="76"/>
        <end position="80"/>
    </location>
</feature>
<feature type="strand" evidence="2">
    <location>
        <begin position="85"/>
        <end position="89"/>
    </location>
</feature>
<feature type="helix" evidence="2">
    <location>
        <begin position="91"/>
        <end position="98"/>
    </location>
</feature>
<feature type="strand" evidence="2">
    <location>
        <begin position="107"/>
        <end position="111"/>
    </location>
</feature>
<feature type="helix" evidence="2">
    <location>
        <begin position="113"/>
        <end position="115"/>
    </location>
</feature>
<feature type="helix" evidence="2">
    <location>
        <begin position="116"/>
        <end position="129"/>
    </location>
</feature>
<feature type="strand" evidence="2">
    <location>
        <begin position="134"/>
        <end position="143"/>
    </location>
</feature>
<feature type="helix" evidence="2">
    <location>
        <begin position="144"/>
        <end position="146"/>
    </location>
</feature>
<feature type="helix" evidence="2">
    <location>
        <begin position="153"/>
        <end position="156"/>
    </location>
</feature>
<feature type="strand" evidence="2">
    <location>
        <begin position="161"/>
        <end position="173"/>
    </location>
</feature>
<feature type="strand" evidence="2">
    <location>
        <begin position="175"/>
        <end position="183"/>
    </location>
</feature>
<feature type="helix" evidence="2">
    <location>
        <begin position="185"/>
        <end position="190"/>
    </location>
</feature>
<feature type="strand" evidence="2">
    <location>
        <begin position="191"/>
        <end position="193"/>
    </location>
</feature>
<feature type="strand" evidence="2">
    <location>
        <begin position="196"/>
        <end position="198"/>
    </location>
</feature>
<feature type="strand" evidence="2">
    <location>
        <begin position="201"/>
        <end position="204"/>
    </location>
</feature>
<feature type="helix" evidence="2">
    <location>
        <begin position="212"/>
        <end position="234"/>
    </location>
</feature>
<feature type="helix" evidence="2">
    <location>
        <begin position="238"/>
        <end position="240"/>
    </location>
</feature>
<feature type="strand" evidence="2">
    <location>
        <begin position="243"/>
        <end position="246"/>
    </location>
</feature>
<feature type="helix" evidence="2">
    <location>
        <begin position="251"/>
        <end position="260"/>
    </location>
</feature>
<feature type="helix" evidence="2">
    <location>
        <begin position="265"/>
        <end position="267"/>
    </location>
</feature>
<feature type="helix" evidence="2">
    <location>
        <begin position="272"/>
        <end position="275"/>
    </location>
</feature>
<feature type="helix" evidence="2">
    <location>
        <begin position="279"/>
        <end position="281"/>
    </location>
</feature>
<feature type="helix" evidence="2">
    <location>
        <begin position="282"/>
        <end position="292"/>
    </location>
</feature>
<feature type="strand" evidence="2">
    <location>
        <begin position="301"/>
        <end position="308"/>
    </location>
</feature>
<feature type="turn" evidence="2">
    <location>
        <begin position="309"/>
        <end position="311"/>
    </location>
</feature>
<feature type="strand" evidence="2">
    <location>
        <begin position="312"/>
        <end position="319"/>
    </location>
</feature>
<organism>
    <name type="scientific">Neisseria meningitidis serogroup C / serotype 2a (strain ATCC 700532 / DSM 15464 / FAM18)</name>
    <dbReference type="NCBI Taxonomy" id="272831"/>
    <lineage>
        <taxon>Bacteria</taxon>
        <taxon>Pseudomonadati</taxon>
        <taxon>Pseudomonadota</taxon>
        <taxon>Betaproteobacteria</taxon>
        <taxon>Neisseriales</taxon>
        <taxon>Neisseriaceae</taxon>
        <taxon>Neisseria</taxon>
    </lineage>
</organism>
<keyword id="KW-0002">3D-structure</keyword>
<keyword id="KW-0012">Acyltransferase</keyword>
<keyword id="KW-0963">Cytoplasm</keyword>
<keyword id="KW-0275">Fatty acid biosynthesis</keyword>
<keyword id="KW-0276">Fatty acid metabolism</keyword>
<keyword id="KW-0444">Lipid biosynthesis</keyword>
<keyword id="KW-0443">Lipid metabolism</keyword>
<keyword id="KW-0511">Multifunctional enzyme</keyword>
<keyword id="KW-0808">Transferase</keyword>
<evidence type="ECO:0000255" key="1">
    <source>
        <dbReference type="HAMAP-Rule" id="MF_01815"/>
    </source>
</evidence>
<evidence type="ECO:0007829" key="2">
    <source>
        <dbReference type="PDB" id="4RYB"/>
    </source>
</evidence>
<reference key="1">
    <citation type="journal article" date="2007" name="PLoS Genet.">
        <title>Meningococcal genetic variation mechanisms viewed through comparative analysis of serogroup C strain FAM18.</title>
        <authorList>
            <person name="Bentley S.D."/>
            <person name="Vernikos G.S."/>
            <person name="Snyder L.A.S."/>
            <person name="Churcher C."/>
            <person name="Arrowsmith C."/>
            <person name="Chillingworth T."/>
            <person name="Cronin A."/>
            <person name="Davis P.H."/>
            <person name="Holroyd N.E."/>
            <person name="Jagels K."/>
            <person name="Maddison M."/>
            <person name="Moule S."/>
            <person name="Rabbinowitsch E."/>
            <person name="Sharp S."/>
            <person name="Unwin L."/>
            <person name="Whitehead S."/>
            <person name="Quail M.A."/>
            <person name="Achtman M."/>
            <person name="Barrell B.G."/>
            <person name="Saunders N.J."/>
            <person name="Parkhill J."/>
        </authorList>
    </citation>
    <scope>NUCLEOTIDE SEQUENCE [LARGE SCALE GENOMIC DNA]</scope>
    <source>
        <strain>ATCC 700532 / DSM 15464 / FAM18</strain>
    </source>
</reference>
<name>FABH_NEIMF</name>
<dbReference type="EC" id="2.3.1.180" evidence="1"/>
<dbReference type="EMBL" id="AM421808">
    <property type="protein sequence ID" value="CAM09618.1"/>
    <property type="molecule type" value="Genomic_DNA"/>
</dbReference>
<dbReference type="RefSeq" id="WP_002218026.1">
    <property type="nucleotide sequence ID" value="NC_008767.1"/>
</dbReference>
<dbReference type="PDB" id="4RYB">
    <property type="method" value="X-ray"/>
    <property type="resolution" value="2.45 A"/>
    <property type="chains" value="A/B=1-320"/>
</dbReference>
<dbReference type="PDBsum" id="4RYB"/>
<dbReference type="SMR" id="A1KRY9"/>
<dbReference type="KEGG" id="nmc:NMC0307"/>
<dbReference type="HOGENOM" id="CLU_039592_4_1_4"/>
<dbReference type="UniPathway" id="UPA00094"/>
<dbReference type="EvolutionaryTrace" id="A1KRY9"/>
<dbReference type="Proteomes" id="UP000002286">
    <property type="component" value="Chromosome"/>
</dbReference>
<dbReference type="GO" id="GO:0005737">
    <property type="term" value="C:cytoplasm"/>
    <property type="evidence" value="ECO:0007669"/>
    <property type="project" value="UniProtKB-SubCell"/>
</dbReference>
<dbReference type="GO" id="GO:0004315">
    <property type="term" value="F:3-oxoacyl-[acyl-carrier-protein] synthase activity"/>
    <property type="evidence" value="ECO:0007669"/>
    <property type="project" value="InterPro"/>
</dbReference>
<dbReference type="GO" id="GO:0033818">
    <property type="term" value="F:beta-ketoacyl-acyl-carrier-protein synthase III activity"/>
    <property type="evidence" value="ECO:0007669"/>
    <property type="project" value="UniProtKB-UniRule"/>
</dbReference>
<dbReference type="GO" id="GO:0006633">
    <property type="term" value="P:fatty acid biosynthetic process"/>
    <property type="evidence" value="ECO:0007669"/>
    <property type="project" value="UniProtKB-UniRule"/>
</dbReference>
<dbReference type="CDD" id="cd00830">
    <property type="entry name" value="KAS_III"/>
    <property type="match status" value="1"/>
</dbReference>
<dbReference type="FunFam" id="3.40.47.10:FF:000004">
    <property type="entry name" value="3-oxoacyl-[acyl-carrier-protein] synthase 3"/>
    <property type="match status" value="1"/>
</dbReference>
<dbReference type="Gene3D" id="3.40.47.10">
    <property type="match status" value="1"/>
</dbReference>
<dbReference type="HAMAP" id="MF_01815">
    <property type="entry name" value="FabH"/>
    <property type="match status" value="1"/>
</dbReference>
<dbReference type="InterPro" id="IPR013747">
    <property type="entry name" value="ACP_syn_III_C"/>
</dbReference>
<dbReference type="InterPro" id="IPR013751">
    <property type="entry name" value="ACP_syn_III_N"/>
</dbReference>
<dbReference type="InterPro" id="IPR004655">
    <property type="entry name" value="FabH"/>
</dbReference>
<dbReference type="InterPro" id="IPR016039">
    <property type="entry name" value="Thiolase-like"/>
</dbReference>
<dbReference type="NCBIfam" id="TIGR00747">
    <property type="entry name" value="fabH"/>
    <property type="match status" value="1"/>
</dbReference>
<dbReference type="NCBIfam" id="NF006829">
    <property type="entry name" value="PRK09352.1"/>
    <property type="match status" value="1"/>
</dbReference>
<dbReference type="PANTHER" id="PTHR43091">
    <property type="entry name" value="3-OXOACYL-[ACYL-CARRIER-PROTEIN] SYNTHASE"/>
    <property type="match status" value="1"/>
</dbReference>
<dbReference type="PANTHER" id="PTHR43091:SF1">
    <property type="entry name" value="BETA-KETOACYL-[ACYL-CARRIER-PROTEIN] SYNTHASE III, CHLOROPLASTIC"/>
    <property type="match status" value="1"/>
</dbReference>
<dbReference type="Pfam" id="PF08545">
    <property type="entry name" value="ACP_syn_III"/>
    <property type="match status" value="1"/>
</dbReference>
<dbReference type="Pfam" id="PF08541">
    <property type="entry name" value="ACP_syn_III_C"/>
    <property type="match status" value="1"/>
</dbReference>
<dbReference type="SUPFAM" id="SSF53901">
    <property type="entry name" value="Thiolase-like"/>
    <property type="match status" value="1"/>
</dbReference>
<accession>A1KRY9</accession>
<comment type="function">
    <text evidence="1">Catalyzes the condensation reaction of fatty acid synthesis by the addition to an acyl acceptor of two carbons from malonyl-ACP. Catalyzes the first condensation reaction which initiates fatty acid synthesis and may therefore play a role in governing the total rate of fatty acid production. Possesses both acetoacetyl-ACP synthase and acetyl transacylase activities. Its substrate specificity determines the biosynthesis of branched-chain and/or straight-chain of fatty acids.</text>
</comment>
<comment type="catalytic activity">
    <reaction evidence="1">
        <text>malonyl-[ACP] + acetyl-CoA + H(+) = 3-oxobutanoyl-[ACP] + CO2 + CoA</text>
        <dbReference type="Rhea" id="RHEA:12080"/>
        <dbReference type="Rhea" id="RHEA-COMP:9623"/>
        <dbReference type="Rhea" id="RHEA-COMP:9625"/>
        <dbReference type="ChEBI" id="CHEBI:15378"/>
        <dbReference type="ChEBI" id="CHEBI:16526"/>
        <dbReference type="ChEBI" id="CHEBI:57287"/>
        <dbReference type="ChEBI" id="CHEBI:57288"/>
        <dbReference type="ChEBI" id="CHEBI:78449"/>
        <dbReference type="ChEBI" id="CHEBI:78450"/>
        <dbReference type="EC" id="2.3.1.180"/>
    </reaction>
</comment>
<comment type="pathway">
    <text evidence="1">Lipid metabolism; fatty acid biosynthesis.</text>
</comment>
<comment type="subunit">
    <text evidence="1">Homodimer.</text>
</comment>
<comment type="subcellular location">
    <subcellularLocation>
        <location evidence="1">Cytoplasm</location>
    </subcellularLocation>
</comment>
<comment type="domain">
    <text evidence="1">The last Arg residue of the ACP-binding site is essential for the weak association between ACP/AcpP and FabH.</text>
</comment>
<comment type="similarity">
    <text evidence="1">Belongs to the thiolase-like superfamily. FabH family.</text>
</comment>
<sequence>MQYAKISGTGSYLPANRVSNDDLAQKVDTSDEWITARTGIKFRHIAAENEKTSDLAAEAARRALDAAGLDSGEIDLIIVATATPDMQFPSTATIVQQKLGITNGCPAFDVQAVCAGFMYALTTANAYIKSGMAKNALVIGAETFSRIVDWNDRTTCVLFGDGAGAVVLSAADKPGIIHSKLKADGNYLKLLNVPGQIACGKVSGSPYISMDGPGVFKFAVKMLSKIADDVIEEAGYTAAQIDWIVPHQANRRIIESTAKHLGLSMDKVVLTVQDHGNTSAASIPLALDTGIRSGQIKRGQNLLLEGIGGGFAWGAVLLQY</sequence>
<gene>
    <name evidence="1" type="primary">fabH</name>
    <name type="ordered locus">NMC0307</name>
</gene>
<protein>
    <recommendedName>
        <fullName evidence="1">Beta-ketoacyl-[acyl-carrier-protein] synthase III</fullName>
        <shortName evidence="1">Beta-ketoacyl-ACP synthase III</shortName>
        <shortName evidence="1">KAS III</shortName>
        <ecNumber evidence="1">2.3.1.180</ecNumber>
    </recommendedName>
    <alternativeName>
        <fullName evidence="1">3-oxoacyl-[acyl-carrier-protein] synthase 3</fullName>
    </alternativeName>
    <alternativeName>
        <fullName evidence="1">3-oxoacyl-[acyl-carrier-protein] synthase III</fullName>
    </alternativeName>
</protein>